<gene>
    <name type="primary">tmem216</name>
</gene>
<sequence>MADVCLRLQYACPWQSNMAAHGRQPVLSSTPLQILFHLNGWYFAAFFVAEILMFIYKGVILPYPQDNLILDVVLLLLFSGLETLRLFYGWKGNLCQRSLALFVSVAILVPCAVLSVYYLLLQTFVLRLEFVLNAVLLCFYGFELVLGVMTISIFSRANIY</sequence>
<protein>
    <recommendedName>
        <fullName>Transmembrane protein 216</fullName>
    </recommendedName>
</protein>
<feature type="chain" id="PRO_0000416297" description="Transmembrane protein 216">
    <location>
        <begin position="1"/>
        <end position="160"/>
    </location>
</feature>
<feature type="transmembrane region" description="Helical" evidence="2">
    <location>
        <begin position="41"/>
        <end position="61"/>
    </location>
</feature>
<feature type="transmembrane region" description="Helical" evidence="2">
    <location>
        <begin position="68"/>
        <end position="88"/>
    </location>
</feature>
<feature type="transmembrane region" description="Helical" evidence="2">
    <location>
        <begin position="101"/>
        <end position="121"/>
    </location>
</feature>
<feature type="transmembrane region" description="Helical" evidence="2">
    <location>
        <begin position="134"/>
        <end position="154"/>
    </location>
</feature>
<name>TM216_DANRE</name>
<dbReference type="EMBL" id="AL645792">
    <property type="status" value="NOT_ANNOTATED_CDS"/>
    <property type="molecule type" value="Genomic_DNA"/>
</dbReference>
<dbReference type="FunCoup" id="E7EYQ9">
    <property type="interactions" value="515"/>
</dbReference>
<dbReference type="STRING" id="7955.ENSDARP00000111752"/>
<dbReference type="TCDB" id="9.B.204.1.2">
    <property type="family name" value="the 4 tms ciliary biogenesis tmem17 (tmem17) family"/>
</dbReference>
<dbReference type="PaxDb" id="7955-ENSDARP00000111752"/>
<dbReference type="Ensembl" id="ENSDART00000131027">
    <property type="protein sequence ID" value="ENSDARP00000111752"/>
    <property type="gene ID" value="ENSDARG00000091576"/>
</dbReference>
<dbReference type="AGR" id="ZFIN:ZDB-GENE-100818-1"/>
<dbReference type="ZFIN" id="ZDB-GENE-100818-1">
    <property type="gene designation" value="tmem216"/>
</dbReference>
<dbReference type="eggNOG" id="KOG4502">
    <property type="taxonomic scope" value="Eukaryota"/>
</dbReference>
<dbReference type="InParanoid" id="E7EYQ9"/>
<dbReference type="OMA" id="AEILMFV"/>
<dbReference type="PhylomeDB" id="E7EYQ9"/>
<dbReference type="TreeFam" id="TF323824"/>
<dbReference type="PRO" id="PR:E7EYQ9"/>
<dbReference type="Proteomes" id="UP000000437">
    <property type="component" value="Unplaced"/>
</dbReference>
<dbReference type="Bgee" id="ENSDARG00000091576">
    <property type="expression patterns" value="Expressed in testis and 21 other cell types or tissues"/>
</dbReference>
<dbReference type="ExpressionAtlas" id="E7EYQ9">
    <property type="expression patterns" value="baseline"/>
</dbReference>
<dbReference type="GO" id="GO:0035869">
    <property type="term" value="C:ciliary transition zone"/>
    <property type="evidence" value="ECO:0000318"/>
    <property type="project" value="GO_Central"/>
</dbReference>
<dbReference type="GO" id="GO:0005737">
    <property type="term" value="C:cytoplasm"/>
    <property type="evidence" value="ECO:0007669"/>
    <property type="project" value="UniProtKB-KW"/>
</dbReference>
<dbReference type="GO" id="GO:0005856">
    <property type="term" value="C:cytoskeleton"/>
    <property type="evidence" value="ECO:0007669"/>
    <property type="project" value="UniProtKB-KW"/>
</dbReference>
<dbReference type="GO" id="GO:0016020">
    <property type="term" value="C:membrane"/>
    <property type="evidence" value="ECO:0007669"/>
    <property type="project" value="UniProtKB-SubCell"/>
</dbReference>
<dbReference type="GO" id="GO:0060271">
    <property type="term" value="P:cilium assembly"/>
    <property type="evidence" value="ECO:0000315"/>
    <property type="project" value="UniProtKB"/>
</dbReference>
<dbReference type="GO" id="GO:0060027">
    <property type="term" value="P:convergent extension involved in gastrulation"/>
    <property type="evidence" value="ECO:0000316"/>
    <property type="project" value="ZFIN"/>
</dbReference>
<dbReference type="GO" id="GO:1905515">
    <property type="term" value="P:non-motile cilium assembly"/>
    <property type="evidence" value="ECO:0000318"/>
    <property type="project" value="GO_Central"/>
</dbReference>
<dbReference type="GO" id="GO:0035845">
    <property type="term" value="P:photoreceptor cell outer segment organization"/>
    <property type="evidence" value="ECO:0000315"/>
    <property type="project" value="ZFIN"/>
</dbReference>
<dbReference type="InterPro" id="IPR019184">
    <property type="entry name" value="Uncharacterised_TM-17"/>
</dbReference>
<dbReference type="PANTHER" id="PTHR13531">
    <property type="entry name" value="GEO07735P1-RELATED-RELATED"/>
    <property type="match status" value="1"/>
</dbReference>
<dbReference type="PANTHER" id="PTHR13531:SF5">
    <property type="entry name" value="TRANSMEMBRANE PROTEIN 216"/>
    <property type="match status" value="1"/>
</dbReference>
<dbReference type="Pfam" id="PF09799">
    <property type="entry name" value="Transmemb_17"/>
    <property type="match status" value="1"/>
</dbReference>
<proteinExistence type="inferred from homology"/>
<evidence type="ECO:0000250" key="1"/>
<evidence type="ECO:0000255" key="2"/>
<evidence type="ECO:0000269" key="3">
    <source>
    </source>
</evidence>
<evidence type="ECO:0000305" key="4"/>
<keyword id="KW-0966">Cell projection</keyword>
<keyword id="KW-0970">Cilium biogenesis/degradation</keyword>
<keyword id="KW-0963">Cytoplasm</keyword>
<keyword id="KW-0206">Cytoskeleton</keyword>
<keyword id="KW-0472">Membrane</keyword>
<keyword id="KW-1185">Reference proteome</keyword>
<keyword id="KW-0812">Transmembrane</keyword>
<keyword id="KW-1133">Transmembrane helix</keyword>
<comment type="function">
    <text evidence="1">Part of the tectonic-like complex which is required for tissue-specific ciliogenesis and may regulate ciliary membrane composition.</text>
</comment>
<comment type="subunit">
    <text evidence="1">Part of the tectonic-like complex (also named B9 complex).</text>
</comment>
<comment type="subcellular location">
    <subcellularLocation>
        <location evidence="4">Membrane</location>
        <topology evidence="4">Multi-pass membrane protein</topology>
    </subcellularLocation>
    <subcellularLocation>
        <location evidence="1">Cytoplasm</location>
        <location evidence="1">Cytoskeleton</location>
        <location evidence="1">Cilium basal body</location>
    </subcellularLocation>
    <text evidence="1">Localizes at the transition zone, a region between the basal body and the ciliary axoneme.</text>
</comment>
<comment type="disruption phenotype">
    <text evidence="3">Ciliary phenotypes such as pericardial effusion, hydrocephalic brain, curved or kinked tail, gastrulation defects and other severe defects in left/right axis.</text>
</comment>
<organism>
    <name type="scientific">Danio rerio</name>
    <name type="common">Zebrafish</name>
    <name type="synonym">Brachydanio rerio</name>
    <dbReference type="NCBI Taxonomy" id="7955"/>
    <lineage>
        <taxon>Eukaryota</taxon>
        <taxon>Metazoa</taxon>
        <taxon>Chordata</taxon>
        <taxon>Craniata</taxon>
        <taxon>Vertebrata</taxon>
        <taxon>Euteleostomi</taxon>
        <taxon>Actinopterygii</taxon>
        <taxon>Neopterygii</taxon>
        <taxon>Teleostei</taxon>
        <taxon>Ostariophysi</taxon>
        <taxon>Cypriniformes</taxon>
        <taxon>Danionidae</taxon>
        <taxon>Danioninae</taxon>
        <taxon>Danio</taxon>
    </lineage>
</organism>
<accession>E7EYQ9</accession>
<reference key="1">
    <citation type="journal article" date="2013" name="Nature">
        <title>The zebrafish reference genome sequence and its relationship to the human genome.</title>
        <authorList>
            <person name="Howe K."/>
            <person name="Clark M.D."/>
            <person name="Torroja C.F."/>
            <person name="Torrance J."/>
            <person name="Berthelot C."/>
            <person name="Muffato M."/>
            <person name="Collins J.E."/>
            <person name="Humphray S."/>
            <person name="McLaren K."/>
            <person name="Matthews L."/>
            <person name="McLaren S."/>
            <person name="Sealy I."/>
            <person name="Caccamo M."/>
            <person name="Churcher C."/>
            <person name="Scott C."/>
            <person name="Barrett J.C."/>
            <person name="Koch R."/>
            <person name="Rauch G.J."/>
            <person name="White S."/>
            <person name="Chow W."/>
            <person name="Kilian B."/>
            <person name="Quintais L.T."/>
            <person name="Guerra-Assuncao J.A."/>
            <person name="Zhou Y."/>
            <person name="Gu Y."/>
            <person name="Yen J."/>
            <person name="Vogel J.H."/>
            <person name="Eyre T."/>
            <person name="Redmond S."/>
            <person name="Banerjee R."/>
            <person name="Chi J."/>
            <person name="Fu B."/>
            <person name="Langley E."/>
            <person name="Maguire S.F."/>
            <person name="Laird G.K."/>
            <person name="Lloyd D."/>
            <person name="Kenyon E."/>
            <person name="Donaldson S."/>
            <person name="Sehra H."/>
            <person name="Almeida-King J."/>
            <person name="Loveland J."/>
            <person name="Trevanion S."/>
            <person name="Jones M."/>
            <person name="Quail M."/>
            <person name="Willey D."/>
            <person name="Hunt A."/>
            <person name="Burton J."/>
            <person name="Sims S."/>
            <person name="McLay K."/>
            <person name="Plumb B."/>
            <person name="Davis J."/>
            <person name="Clee C."/>
            <person name="Oliver K."/>
            <person name="Clark R."/>
            <person name="Riddle C."/>
            <person name="Elliot D."/>
            <person name="Threadgold G."/>
            <person name="Harden G."/>
            <person name="Ware D."/>
            <person name="Begum S."/>
            <person name="Mortimore B."/>
            <person name="Kerry G."/>
            <person name="Heath P."/>
            <person name="Phillimore B."/>
            <person name="Tracey A."/>
            <person name="Corby N."/>
            <person name="Dunn M."/>
            <person name="Johnson C."/>
            <person name="Wood J."/>
            <person name="Clark S."/>
            <person name="Pelan S."/>
            <person name="Griffiths G."/>
            <person name="Smith M."/>
            <person name="Glithero R."/>
            <person name="Howden P."/>
            <person name="Barker N."/>
            <person name="Lloyd C."/>
            <person name="Stevens C."/>
            <person name="Harley J."/>
            <person name="Holt K."/>
            <person name="Panagiotidis G."/>
            <person name="Lovell J."/>
            <person name="Beasley H."/>
            <person name="Henderson C."/>
            <person name="Gordon D."/>
            <person name="Auger K."/>
            <person name="Wright D."/>
            <person name="Collins J."/>
            <person name="Raisen C."/>
            <person name="Dyer L."/>
            <person name="Leung K."/>
            <person name="Robertson L."/>
            <person name="Ambridge K."/>
            <person name="Leongamornlert D."/>
            <person name="McGuire S."/>
            <person name="Gilderthorp R."/>
            <person name="Griffiths C."/>
            <person name="Manthravadi D."/>
            <person name="Nichol S."/>
            <person name="Barker G."/>
            <person name="Whitehead S."/>
            <person name="Kay M."/>
            <person name="Brown J."/>
            <person name="Murnane C."/>
            <person name="Gray E."/>
            <person name="Humphries M."/>
            <person name="Sycamore N."/>
            <person name="Barker D."/>
            <person name="Saunders D."/>
            <person name="Wallis J."/>
            <person name="Babbage A."/>
            <person name="Hammond S."/>
            <person name="Mashreghi-Mohammadi M."/>
            <person name="Barr L."/>
            <person name="Martin S."/>
            <person name="Wray P."/>
            <person name="Ellington A."/>
            <person name="Matthews N."/>
            <person name="Ellwood M."/>
            <person name="Woodmansey R."/>
            <person name="Clark G."/>
            <person name="Cooper J."/>
            <person name="Tromans A."/>
            <person name="Grafham D."/>
            <person name="Skuce C."/>
            <person name="Pandian R."/>
            <person name="Andrews R."/>
            <person name="Harrison E."/>
            <person name="Kimberley A."/>
            <person name="Garnett J."/>
            <person name="Fosker N."/>
            <person name="Hall R."/>
            <person name="Garner P."/>
            <person name="Kelly D."/>
            <person name="Bird C."/>
            <person name="Palmer S."/>
            <person name="Gehring I."/>
            <person name="Berger A."/>
            <person name="Dooley C.M."/>
            <person name="Ersan-Urun Z."/>
            <person name="Eser C."/>
            <person name="Geiger H."/>
            <person name="Geisler M."/>
            <person name="Karotki L."/>
            <person name="Kirn A."/>
            <person name="Konantz J."/>
            <person name="Konantz M."/>
            <person name="Oberlander M."/>
            <person name="Rudolph-Geiger S."/>
            <person name="Teucke M."/>
            <person name="Lanz C."/>
            <person name="Raddatz G."/>
            <person name="Osoegawa K."/>
            <person name="Zhu B."/>
            <person name="Rapp A."/>
            <person name="Widaa S."/>
            <person name="Langford C."/>
            <person name="Yang F."/>
            <person name="Schuster S.C."/>
            <person name="Carter N.P."/>
            <person name="Harrow J."/>
            <person name="Ning Z."/>
            <person name="Herrero J."/>
            <person name="Searle S.M."/>
            <person name="Enright A."/>
            <person name="Geisler R."/>
            <person name="Plasterk R.H."/>
            <person name="Lee C."/>
            <person name="Westerfield M."/>
            <person name="de Jong P.J."/>
            <person name="Zon L.I."/>
            <person name="Postlethwait J.H."/>
            <person name="Nusslein-Volhard C."/>
            <person name="Hubbard T.J."/>
            <person name="Roest Crollius H."/>
            <person name="Rogers J."/>
            <person name="Stemple D.L."/>
        </authorList>
    </citation>
    <scope>NUCLEOTIDE SEQUENCE [LARGE SCALE GENOMIC DNA]</scope>
    <source>
        <strain>Tuebingen</strain>
    </source>
</reference>
<reference key="2">
    <citation type="journal article" date="2012" name="Science">
        <title>Evolutionarily assembled cis-regulatory module at a human ciliopathy locus.</title>
        <authorList>
            <person name="Lee J.H."/>
            <person name="Silhavy J.L."/>
            <person name="Lee J.E."/>
            <person name="Al-Gazali L."/>
            <person name="Thomas S."/>
            <person name="Davis E.E."/>
            <person name="Bielas S.L."/>
            <person name="Hill K.J."/>
            <person name="Iannicelli M."/>
            <person name="Brancati F."/>
            <person name="Gabriel S.B."/>
            <person name="Russ C."/>
            <person name="Logan C.V."/>
            <person name="Sharif S.M."/>
            <person name="Bennett C.P."/>
            <person name="Abe M."/>
            <person name="Hildebrandt F."/>
            <person name="Diplas B.H."/>
            <person name="Attie-Bitach T."/>
            <person name="Katsanis N."/>
            <person name="Rajab A."/>
            <person name="Koul R."/>
            <person name="Sztriha L."/>
            <person name="Waters E.R."/>
            <person name="Ferro-Novick S."/>
            <person name="Woods G.C."/>
            <person name="Johnson C.A."/>
            <person name="Valente E.M."/>
            <person name="Zaki M.S."/>
            <person name="Gleeson J.G."/>
        </authorList>
    </citation>
    <scope>DISRUPTION PHENOTYPE</scope>
</reference>